<sequence length="159" mass="18571">MINYLKSFFLYEIVRGMALTLKYFFKPKVTINYPYEKSPISPRFKGEHALRRYENGEERCIACKLCEAICPAQAIVIEADEREDGSRRTTRYDIDMTKCIYCGLCQEACPVDAIVEGPNFEFASLTHTALIYDKERLLQNGDRWEQALASKLHKDYEYR</sequence>
<feature type="chain" id="PRO_1000214852" description="NADH-quinone oxidoreductase subunit I">
    <location>
        <begin position="1"/>
        <end position="159"/>
    </location>
</feature>
<feature type="domain" description="4Fe-4S ferredoxin-type 1" evidence="1">
    <location>
        <begin position="51"/>
        <end position="80"/>
    </location>
</feature>
<feature type="domain" description="4Fe-4S ferredoxin-type 2" evidence="1">
    <location>
        <begin position="90"/>
        <end position="119"/>
    </location>
</feature>
<feature type="binding site" evidence="1">
    <location>
        <position position="60"/>
    </location>
    <ligand>
        <name>[4Fe-4S] cluster</name>
        <dbReference type="ChEBI" id="CHEBI:49883"/>
        <label>1</label>
    </ligand>
</feature>
<feature type="binding site" evidence="1">
    <location>
        <position position="63"/>
    </location>
    <ligand>
        <name>[4Fe-4S] cluster</name>
        <dbReference type="ChEBI" id="CHEBI:49883"/>
        <label>1</label>
    </ligand>
</feature>
<feature type="binding site" evidence="1">
    <location>
        <position position="66"/>
    </location>
    <ligand>
        <name>[4Fe-4S] cluster</name>
        <dbReference type="ChEBI" id="CHEBI:49883"/>
        <label>1</label>
    </ligand>
</feature>
<feature type="binding site" evidence="1">
    <location>
        <position position="70"/>
    </location>
    <ligand>
        <name>[4Fe-4S] cluster</name>
        <dbReference type="ChEBI" id="CHEBI:49883"/>
        <label>2</label>
    </ligand>
</feature>
<feature type="binding site" evidence="1">
    <location>
        <position position="99"/>
    </location>
    <ligand>
        <name>[4Fe-4S] cluster</name>
        <dbReference type="ChEBI" id="CHEBI:49883"/>
        <label>2</label>
    </ligand>
</feature>
<feature type="binding site" evidence="1">
    <location>
        <position position="102"/>
    </location>
    <ligand>
        <name>[4Fe-4S] cluster</name>
        <dbReference type="ChEBI" id="CHEBI:49883"/>
        <label>2</label>
    </ligand>
</feature>
<feature type="binding site" evidence="1">
    <location>
        <position position="105"/>
    </location>
    <ligand>
        <name>[4Fe-4S] cluster</name>
        <dbReference type="ChEBI" id="CHEBI:49883"/>
        <label>2</label>
    </ligand>
</feature>
<feature type="binding site" evidence="1">
    <location>
        <position position="109"/>
    </location>
    <ligand>
        <name>[4Fe-4S] cluster</name>
        <dbReference type="ChEBI" id="CHEBI:49883"/>
        <label>1</label>
    </ligand>
</feature>
<gene>
    <name evidence="1" type="primary">nuoI</name>
    <name type="ordered locus">RPR_04890</name>
</gene>
<comment type="function">
    <text evidence="1">NDH-1 shuttles electrons from NADH, via FMN and iron-sulfur (Fe-S) centers, to quinones in the respiratory chain. The immediate electron acceptor for the enzyme in this species is believed to be ubiquinone. Couples the redox reaction to proton translocation (for every two electrons transferred, four hydrogen ions are translocated across the cytoplasmic membrane), and thus conserves the redox energy in a proton gradient.</text>
</comment>
<comment type="catalytic activity">
    <reaction evidence="1">
        <text>a quinone + NADH + 5 H(+)(in) = a quinol + NAD(+) + 4 H(+)(out)</text>
        <dbReference type="Rhea" id="RHEA:57888"/>
        <dbReference type="ChEBI" id="CHEBI:15378"/>
        <dbReference type="ChEBI" id="CHEBI:24646"/>
        <dbReference type="ChEBI" id="CHEBI:57540"/>
        <dbReference type="ChEBI" id="CHEBI:57945"/>
        <dbReference type="ChEBI" id="CHEBI:132124"/>
    </reaction>
</comment>
<comment type="cofactor">
    <cofactor evidence="1">
        <name>[4Fe-4S] cluster</name>
        <dbReference type="ChEBI" id="CHEBI:49883"/>
    </cofactor>
    <text evidence="1">Binds 2 [4Fe-4S] clusters per subunit.</text>
</comment>
<comment type="subunit">
    <text evidence="1">NDH-1 is composed of 14 different subunits. Subunits NuoA, H, J, K, L, M, N constitute the membrane sector of the complex.</text>
</comment>
<comment type="subcellular location">
    <subcellularLocation>
        <location evidence="1">Cell inner membrane</location>
        <topology evidence="1">Peripheral membrane protein</topology>
    </subcellularLocation>
</comment>
<comment type="similarity">
    <text evidence="1">Belongs to the complex I 23 kDa subunit family.</text>
</comment>
<reference key="1">
    <citation type="journal article" date="2009" name="PLoS ONE">
        <title>Genome sequence of the endosymbiont Rickettsia peacockii and comparison with virulent Rickettsia rickettsii: identification of virulence factors.</title>
        <authorList>
            <person name="Felsheim R.F."/>
            <person name="Kurtti T.J."/>
            <person name="Munderloh U.G."/>
        </authorList>
    </citation>
    <scope>NUCLEOTIDE SEQUENCE [LARGE SCALE GENOMIC DNA]</scope>
    <source>
        <strain>Rustic</strain>
    </source>
</reference>
<proteinExistence type="inferred from homology"/>
<organism>
    <name type="scientific">Rickettsia peacockii (strain Rustic)</name>
    <dbReference type="NCBI Taxonomy" id="562019"/>
    <lineage>
        <taxon>Bacteria</taxon>
        <taxon>Pseudomonadati</taxon>
        <taxon>Pseudomonadota</taxon>
        <taxon>Alphaproteobacteria</taxon>
        <taxon>Rickettsiales</taxon>
        <taxon>Rickettsiaceae</taxon>
        <taxon>Rickettsieae</taxon>
        <taxon>Rickettsia</taxon>
        <taxon>spotted fever group</taxon>
    </lineage>
</organism>
<accession>C4K221</accession>
<keyword id="KW-0004">4Fe-4S</keyword>
<keyword id="KW-0997">Cell inner membrane</keyword>
<keyword id="KW-1003">Cell membrane</keyword>
<keyword id="KW-0408">Iron</keyword>
<keyword id="KW-0411">Iron-sulfur</keyword>
<keyword id="KW-0472">Membrane</keyword>
<keyword id="KW-0479">Metal-binding</keyword>
<keyword id="KW-0520">NAD</keyword>
<keyword id="KW-0874">Quinone</keyword>
<keyword id="KW-0677">Repeat</keyword>
<keyword id="KW-1278">Translocase</keyword>
<keyword id="KW-0830">Ubiquinone</keyword>
<dbReference type="EC" id="7.1.1.-" evidence="1"/>
<dbReference type="EMBL" id="CP001227">
    <property type="protein sequence ID" value="ACR47619.1"/>
    <property type="molecule type" value="Genomic_DNA"/>
</dbReference>
<dbReference type="RefSeq" id="WP_012736832.1">
    <property type="nucleotide sequence ID" value="NC_012730.1"/>
</dbReference>
<dbReference type="SMR" id="C4K221"/>
<dbReference type="KEGG" id="rpk:RPR_04890"/>
<dbReference type="HOGENOM" id="CLU_067218_5_1_5"/>
<dbReference type="Proteomes" id="UP000005015">
    <property type="component" value="Chromosome"/>
</dbReference>
<dbReference type="GO" id="GO:0005886">
    <property type="term" value="C:plasma membrane"/>
    <property type="evidence" value="ECO:0007669"/>
    <property type="project" value="UniProtKB-SubCell"/>
</dbReference>
<dbReference type="GO" id="GO:0051539">
    <property type="term" value="F:4 iron, 4 sulfur cluster binding"/>
    <property type="evidence" value="ECO:0007669"/>
    <property type="project" value="UniProtKB-KW"/>
</dbReference>
<dbReference type="GO" id="GO:0005506">
    <property type="term" value="F:iron ion binding"/>
    <property type="evidence" value="ECO:0007669"/>
    <property type="project" value="UniProtKB-UniRule"/>
</dbReference>
<dbReference type="GO" id="GO:0050136">
    <property type="term" value="F:NADH:ubiquinone reductase (non-electrogenic) activity"/>
    <property type="evidence" value="ECO:0007669"/>
    <property type="project" value="UniProtKB-UniRule"/>
</dbReference>
<dbReference type="GO" id="GO:0048038">
    <property type="term" value="F:quinone binding"/>
    <property type="evidence" value="ECO:0007669"/>
    <property type="project" value="UniProtKB-KW"/>
</dbReference>
<dbReference type="GO" id="GO:0009060">
    <property type="term" value="P:aerobic respiration"/>
    <property type="evidence" value="ECO:0007669"/>
    <property type="project" value="TreeGrafter"/>
</dbReference>
<dbReference type="FunFam" id="3.30.70.3270:FF:000001">
    <property type="entry name" value="NADH-quinone oxidoreductase subunit I 1"/>
    <property type="match status" value="1"/>
</dbReference>
<dbReference type="Gene3D" id="3.30.70.3270">
    <property type="match status" value="1"/>
</dbReference>
<dbReference type="HAMAP" id="MF_01351">
    <property type="entry name" value="NDH1_NuoI"/>
    <property type="match status" value="1"/>
</dbReference>
<dbReference type="InterPro" id="IPR017896">
    <property type="entry name" value="4Fe4S_Fe-S-bd"/>
</dbReference>
<dbReference type="InterPro" id="IPR017900">
    <property type="entry name" value="4Fe4S_Fe_S_CS"/>
</dbReference>
<dbReference type="InterPro" id="IPR010226">
    <property type="entry name" value="NADH_quinone_OxRdtase_chainI"/>
</dbReference>
<dbReference type="NCBIfam" id="TIGR01971">
    <property type="entry name" value="NuoI"/>
    <property type="match status" value="1"/>
</dbReference>
<dbReference type="NCBIfam" id="NF004538">
    <property type="entry name" value="PRK05888.1-4"/>
    <property type="match status" value="1"/>
</dbReference>
<dbReference type="NCBIfam" id="NF004539">
    <property type="entry name" value="PRK05888.1-5"/>
    <property type="match status" value="1"/>
</dbReference>
<dbReference type="PANTHER" id="PTHR10849:SF20">
    <property type="entry name" value="NADH DEHYDROGENASE [UBIQUINONE] IRON-SULFUR PROTEIN 8, MITOCHONDRIAL"/>
    <property type="match status" value="1"/>
</dbReference>
<dbReference type="PANTHER" id="PTHR10849">
    <property type="entry name" value="NADH DEHYDROGENASE UBIQUINONE IRON-SULFUR PROTEIN 8, MITOCHONDRIAL"/>
    <property type="match status" value="1"/>
</dbReference>
<dbReference type="Pfam" id="PF12838">
    <property type="entry name" value="Fer4_7"/>
    <property type="match status" value="1"/>
</dbReference>
<dbReference type="SUPFAM" id="SSF54862">
    <property type="entry name" value="4Fe-4S ferredoxins"/>
    <property type="match status" value="1"/>
</dbReference>
<dbReference type="PROSITE" id="PS00198">
    <property type="entry name" value="4FE4S_FER_1"/>
    <property type="match status" value="2"/>
</dbReference>
<dbReference type="PROSITE" id="PS51379">
    <property type="entry name" value="4FE4S_FER_2"/>
    <property type="match status" value="2"/>
</dbReference>
<evidence type="ECO:0000255" key="1">
    <source>
        <dbReference type="HAMAP-Rule" id="MF_01351"/>
    </source>
</evidence>
<protein>
    <recommendedName>
        <fullName evidence="1">NADH-quinone oxidoreductase subunit I</fullName>
        <ecNumber evidence="1">7.1.1.-</ecNumber>
    </recommendedName>
    <alternativeName>
        <fullName evidence="1">NADH dehydrogenase I subunit I</fullName>
    </alternativeName>
    <alternativeName>
        <fullName evidence="1">NDH-1 subunit I</fullName>
    </alternativeName>
</protein>
<name>NUOI_RICPU</name>